<organism>
    <name type="scientific">Methanosarcina barkeri (strain Fusaro / DSM 804)</name>
    <dbReference type="NCBI Taxonomy" id="269797"/>
    <lineage>
        <taxon>Archaea</taxon>
        <taxon>Methanobacteriati</taxon>
        <taxon>Methanobacteriota</taxon>
        <taxon>Stenosarchaea group</taxon>
        <taxon>Methanomicrobia</taxon>
        <taxon>Methanosarcinales</taxon>
        <taxon>Methanosarcinaceae</taxon>
        <taxon>Methanosarcina</taxon>
    </lineage>
</organism>
<accession>Q465V4</accession>
<protein>
    <recommendedName>
        <fullName evidence="1">Small ribosomal subunit protein eS8</fullName>
    </recommendedName>
    <alternativeName>
        <fullName evidence="2">30S ribosomal protein S8e</fullName>
    </alternativeName>
</protein>
<reference key="1">
    <citation type="journal article" date="2006" name="J. Bacteriol.">
        <title>The Methanosarcina barkeri genome: comparative analysis with Methanosarcina acetivorans and Methanosarcina mazei reveals extensive rearrangement within methanosarcinal genomes.</title>
        <authorList>
            <person name="Maeder D.L."/>
            <person name="Anderson I."/>
            <person name="Brettin T.S."/>
            <person name="Bruce D.C."/>
            <person name="Gilna P."/>
            <person name="Han C.S."/>
            <person name="Lapidus A."/>
            <person name="Metcalf W.W."/>
            <person name="Saunders E."/>
            <person name="Tapia R."/>
            <person name="Sowers K.R."/>
        </authorList>
    </citation>
    <scope>NUCLEOTIDE SEQUENCE [LARGE SCALE GENOMIC DNA]</scope>
    <source>
        <strain>Fusaro / DSM 804</strain>
    </source>
</reference>
<keyword id="KW-0687">Ribonucleoprotein</keyword>
<keyword id="KW-0689">Ribosomal protein</keyword>
<proteinExistence type="inferred from homology"/>
<feature type="chain" id="PRO_0000304174" description="Small ribosomal subunit protein eS8">
    <location>
        <begin position="1"/>
        <end position="125"/>
    </location>
</feature>
<dbReference type="EMBL" id="CP000099">
    <property type="protein sequence ID" value="AAZ72338.1"/>
    <property type="molecule type" value="Genomic_DNA"/>
</dbReference>
<dbReference type="SMR" id="Q465V4"/>
<dbReference type="STRING" id="269797.Mbar_A3465"/>
<dbReference type="PaxDb" id="269797-Mbar_A3465"/>
<dbReference type="KEGG" id="mba:Mbar_A3465"/>
<dbReference type="eggNOG" id="arCOG04154">
    <property type="taxonomic scope" value="Archaea"/>
</dbReference>
<dbReference type="HOGENOM" id="CLU_080597_2_1_2"/>
<dbReference type="OrthoDB" id="372305at2157"/>
<dbReference type="GO" id="GO:1990904">
    <property type="term" value="C:ribonucleoprotein complex"/>
    <property type="evidence" value="ECO:0007669"/>
    <property type="project" value="UniProtKB-KW"/>
</dbReference>
<dbReference type="GO" id="GO:0005840">
    <property type="term" value="C:ribosome"/>
    <property type="evidence" value="ECO:0007669"/>
    <property type="project" value="UniProtKB-KW"/>
</dbReference>
<dbReference type="GO" id="GO:0003735">
    <property type="term" value="F:structural constituent of ribosome"/>
    <property type="evidence" value="ECO:0007669"/>
    <property type="project" value="InterPro"/>
</dbReference>
<dbReference type="GO" id="GO:0006412">
    <property type="term" value="P:translation"/>
    <property type="evidence" value="ECO:0007669"/>
    <property type="project" value="UniProtKB-UniRule"/>
</dbReference>
<dbReference type="CDD" id="cd11382">
    <property type="entry name" value="Ribosomal_S8e"/>
    <property type="match status" value="1"/>
</dbReference>
<dbReference type="FunFam" id="2.40.10.310:FF:000002">
    <property type="entry name" value="30S ribosomal protein S8e"/>
    <property type="match status" value="1"/>
</dbReference>
<dbReference type="Gene3D" id="2.40.10.310">
    <property type="match status" value="1"/>
</dbReference>
<dbReference type="HAMAP" id="MF_00029">
    <property type="entry name" value="Ribosomal_eS8"/>
    <property type="match status" value="1"/>
</dbReference>
<dbReference type="InterPro" id="IPR001047">
    <property type="entry name" value="Ribosomal_eS8"/>
</dbReference>
<dbReference type="InterPro" id="IPR018283">
    <property type="entry name" value="Ribosomal_eS8_CS"/>
</dbReference>
<dbReference type="InterPro" id="IPR020919">
    <property type="entry name" value="Ribosomal_protein_eS8_arc"/>
</dbReference>
<dbReference type="InterPro" id="IPR022309">
    <property type="entry name" value="Ribosomal_Se8/biogenesis_NSA2"/>
</dbReference>
<dbReference type="NCBIfam" id="TIGR00307">
    <property type="entry name" value="eS8"/>
    <property type="match status" value="1"/>
</dbReference>
<dbReference type="PANTHER" id="PTHR10394">
    <property type="entry name" value="40S RIBOSOMAL PROTEIN S8"/>
    <property type="match status" value="1"/>
</dbReference>
<dbReference type="Pfam" id="PF01201">
    <property type="entry name" value="Ribosomal_S8e"/>
    <property type="match status" value="1"/>
</dbReference>
<dbReference type="PROSITE" id="PS01193">
    <property type="entry name" value="RIBOSOMAL_S8E"/>
    <property type="match status" value="1"/>
</dbReference>
<name>RS8E_METBF</name>
<sequence>MRWQGSSRRKVTGGKVINARGKRKFEMGRESAETRISEIKRKNVHTMGGNRKVRLLQCDVANITNPKDGKTTSAPIETVLDNIANKHYIRRNILTKGSVIRTPLGTAKVTSRPGQDGVVNAVLIE</sequence>
<evidence type="ECO:0000255" key="1">
    <source>
        <dbReference type="HAMAP-Rule" id="MF_00029"/>
    </source>
</evidence>
<evidence type="ECO:0000305" key="2"/>
<gene>
    <name evidence="1" type="primary">rps8e</name>
    <name type="ordered locus">Mbar_A3465</name>
</gene>
<comment type="subunit">
    <text evidence="1">Part of the 30S ribosomal subunit.</text>
</comment>
<comment type="similarity">
    <text evidence="1">Belongs to the eukaryotic ribosomal protein eS8 family.</text>
</comment>